<proteinExistence type="evidence at protein level"/>
<accession>P16531</accession>
<dbReference type="EMBL" id="M31653">
    <property type="protein sequence ID" value="AAA37055.1"/>
    <property type="molecule type" value="mRNA"/>
</dbReference>
<dbReference type="PIR" id="A41405">
    <property type="entry name" value="A41405"/>
</dbReference>
<dbReference type="InParanoid" id="P16531"/>
<dbReference type="Proteomes" id="UP000005447">
    <property type="component" value="Unassembled WGS sequence"/>
</dbReference>
<dbReference type="GO" id="GO:0005576">
    <property type="term" value="C:extracellular region"/>
    <property type="evidence" value="ECO:0007669"/>
    <property type="project" value="UniProtKB-SubCell"/>
</dbReference>
<name>SVP2_CAVPO</name>
<keyword id="KW-0025">Alternative splicing</keyword>
<keyword id="KW-0165">Cleavage on pair of basic residues</keyword>
<keyword id="KW-0903">Direct protein sequencing</keyword>
<keyword id="KW-1185">Reference proteome</keyword>
<keyword id="KW-0964">Secreted</keyword>
<keyword id="KW-0732">Signal</keyword>
<evidence type="ECO:0000255" key="1"/>
<evidence type="ECO:0000256" key="2">
    <source>
        <dbReference type="SAM" id="MobiDB-lite"/>
    </source>
</evidence>
<evidence type="ECO:0000269" key="3">
    <source>
    </source>
</evidence>
<evidence type="ECO:0000303" key="4">
    <source>
    </source>
</evidence>
<evidence type="ECO:0000305" key="5"/>
<organism>
    <name type="scientific">Cavia porcellus</name>
    <name type="common">Guinea pig</name>
    <dbReference type="NCBI Taxonomy" id="10141"/>
    <lineage>
        <taxon>Eukaryota</taxon>
        <taxon>Metazoa</taxon>
        <taxon>Chordata</taxon>
        <taxon>Craniata</taxon>
        <taxon>Vertebrata</taxon>
        <taxon>Euteleostomi</taxon>
        <taxon>Mammalia</taxon>
        <taxon>Eutheria</taxon>
        <taxon>Euarchontoglires</taxon>
        <taxon>Glires</taxon>
        <taxon>Rodentia</taxon>
        <taxon>Hystricomorpha</taxon>
        <taxon>Caviidae</taxon>
        <taxon>Cavia</taxon>
    </lineage>
</organism>
<feature type="signal peptide" evidence="3">
    <location>
        <begin position="1" status="less than"/>
        <end position="14"/>
    </location>
</feature>
<feature type="chain" id="PRO_0000022446" description="Seminal vesicle protein SVP-2">
    <location>
        <begin position="15"/>
        <end position="103"/>
    </location>
</feature>
<feature type="propeptide" id="PRO_0000022447" evidence="1">
    <location>
        <begin position="104"/>
        <end position="132"/>
    </location>
</feature>
<feature type="region of interest" description="Disordered" evidence="2">
    <location>
        <begin position="33"/>
        <end position="104"/>
    </location>
</feature>
<feature type="region of interest" description="Disordered" evidence="2">
    <location>
        <begin position="113"/>
        <end position="132"/>
    </location>
</feature>
<feature type="compositionally biased region" description="Basic and acidic residues" evidence="2">
    <location>
        <begin position="33"/>
        <end position="81"/>
    </location>
</feature>
<feature type="splice variant" id="VSP_004437" description="In isoform 2." evidence="4">
    <original>R</original>
    <variation>RA</variation>
    <location>
        <position position="18"/>
    </location>
</feature>
<feature type="sequence variant">
    <original>S</original>
    <variation>L</variation>
    <location>
        <position position="95"/>
    </location>
</feature>
<feature type="non-terminal residue">
    <location>
        <position position="1"/>
    </location>
</feature>
<reference key="1">
    <citation type="journal article" date="1989" name="Mol. Endocrinol.">
        <title>Androgens affect the processing of secretory protein precursors in the guinea pig seminal vesicle. II. Identification of conserved sites for protein processing.</title>
        <authorList>
            <person name="Hagstrom J.E."/>
            <person name="Harvey S."/>
            <person name="Madden B."/>
            <person name="McCormick D."/>
            <person name="Wieben E.D."/>
        </authorList>
    </citation>
    <scope>NUCLEOTIDE SEQUENCE [MRNA] (ISOFORMS 1 AND 2)</scope>
    <scope>PROTEIN SEQUENCE OF 15-39</scope>
</reference>
<comment type="subcellular location">
    <subcellularLocation>
        <location>Secreted</location>
    </subcellularLocation>
</comment>
<comment type="alternative products">
    <event type="alternative splicing"/>
    <isoform>
        <id>P16531-1</id>
        <name>1</name>
        <sequence type="displayed"/>
    </isoform>
    <isoform>
        <id>P16531-2</id>
        <name>2</name>
        <sequence type="described" ref="VSP_004437"/>
    </isoform>
</comment>
<comment type="miscellaneous">
    <text>SVP-2 is one of the 4 major secretory proteins, secreted by the guinea pig seminal vesicle epithelium (sve).</text>
</comment>
<comment type="similarity">
    <text evidence="5">To the SVP-1/-3/-4 precursor, particularly in regions where protein processing must occur.</text>
</comment>
<sequence length="132" mass="14926">HLALLLILENQASGRRLRGSARAQDPVVSRVWHKEEVEESESSRGQDFDKRRFWEKDDPTGEHVSVRHEHLEKSHIRFKEDSIDDSGSAGGLNPSKGHLRLKRHDAMEELVSVEDQALANGADPGKSNMQRV</sequence>
<protein>
    <recommendedName>
        <fullName>Seminal vesicle protein SVP-2</fullName>
    </recommendedName>
</protein>